<name>RUXG_MEDSA</name>
<dbReference type="EMBL" id="X63376">
    <property type="protein sequence ID" value="CAA44975.1"/>
    <property type="molecule type" value="mRNA"/>
</dbReference>
<dbReference type="PIR" id="S22826">
    <property type="entry name" value="S22826"/>
</dbReference>
<dbReference type="SMR" id="P24715"/>
<dbReference type="GO" id="GO:0071013">
    <property type="term" value="C:catalytic step 2 spliceosome"/>
    <property type="evidence" value="ECO:0007669"/>
    <property type="project" value="TreeGrafter"/>
</dbReference>
<dbReference type="GO" id="GO:0043186">
    <property type="term" value="C:P granule"/>
    <property type="evidence" value="ECO:0007669"/>
    <property type="project" value="TreeGrafter"/>
</dbReference>
<dbReference type="GO" id="GO:0071011">
    <property type="term" value="C:precatalytic spliceosome"/>
    <property type="evidence" value="ECO:0007669"/>
    <property type="project" value="TreeGrafter"/>
</dbReference>
<dbReference type="GO" id="GO:0034719">
    <property type="term" value="C:SMN-Sm protein complex"/>
    <property type="evidence" value="ECO:0007669"/>
    <property type="project" value="TreeGrafter"/>
</dbReference>
<dbReference type="GO" id="GO:0097526">
    <property type="term" value="C:spliceosomal tri-snRNP complex"/>
    <property type="evidence" value="ECO:0007669"/>
    <property type="project" value="TreeGrafter"/>
</dbReference>
<dbReference type="GO" id="GO:0005685">
    <property type="term" value="C:U1 snRNP"/>
    <property type="evidence" value="ECO:0007669"/>
    <property type="project" value="TreeGrafter"/>
</dbReference>
<dbReference type="GO" id="GO:0005689">
    <property type="term" value="C:U12-type spliceosomal complex"/>
    <property type="evidence" value="ECO:0007669"/>
    <property type="project" value="TreeGrafter"/>
</dbReference>
<dbReference type="GO" id="GO:0005686">
    <property type="term" value="C:U2 snRNP"/>
    <property type="evidence" value="ECO:0007669"/>
    <property type="project" value="TreeGrafter"/>
</dbReference>
<dbReference type="GO" id="GO:0071004">
    <property type="term" value="C:U2-type prespliceosome"/>
    <property type="evidence" value="ECO:0007669"/>
    <property type="project" value="TreeGrafter"/>
</dbReference>
<dbReference type="GO" id="GO:0005687">
    <property type="term" value="C:U4 snRNP"/>
    <property type="evidence" value="ECO:0007669"/>
    <property type="project" value="TreeGrafter"/>
</dbReference>
<dbReference type="GO" id="GO:0005682">
    <property type="term" value="C:U5 snRNP"/>
    <property type="evidence" value="ECO:0007669"/>
    <property type="project" value="TreeGrafter"/>
</dbReference>
<dbReference type="GO" id="GO:0003723">
    <property type="term" value="F:RNA binding"/>
    <property type="evidence" value="ECO:0007669"/>
    <property type="project" value="UniProtKB-KW"/>
</dbReference>
<dbReference type="GO" id="GO:0000398">
    <property type="term" value="P:mRNA splicing, via spliceosome"/>
    <property type="evidence" value="ECO:0007669"/>
    <property type="project" value="InterPro"/>
</dbReference>
<dbReference type="CDD" id="cd01719">
    <property type="entry name" value="Sm_G"/>
    <property type="match status" value="1"/>
</dbReference>
<dbReference type="FunFam" id="2.30.30.100:FF:000023">
    <property type="entry name" value="Small nuclear ribonucleoprotein G"/>
    <property type="match status" value="1"/>
</dbReference>
<dbReference type="Gene3D" id="2.30.30.100">
    <property type="match status" value="1"/>
</dbReference>
<dbReference type="InterPro" id="IPR044641">
    <property type="entry name" value="Lsm7/SmG-like"/>
</dbReference>
<dbReference type="InterPro" id="IPR010920">
    <property type="entry name" value="LSM_dom_sf"/>
</dbReference>
<dbReference type="InterPro" id="IPR047575">
    <property type="entry name" value="Sm"/>
</dbReference>
<dbReference type="InterPro" id="IPR001163">
    <property type="entry name" value="Sm_dom_euk/arc"/>
</dbReference>
<dbReference type="InterPro" id="IPR034098">
    <property type="entry name" value="Sm_G"/>
</dbReference>
<dbReference type="PANTHER" id="PTHR10553">
    <property type="entry name" value="SMALL NUCLEAR RIBONUCLEOPROTEIN"/>
    <property type="match status" value="1"/>
</dbReference>
<dbReference type="PANTHER" id="PTHR10553:SF2">
    <property type="entry name" value="SMALL NUCLEAR RIBONUCLEOPROTEIN G"/>
    <property type="match status" value="1"/>
</dbReference>
<dbReference type="Pfam" id="PF01423">
    <property type="entry name" value="LSM"/>
    <property type="match status" value="1"/>
</dbReference>
<dbReference type="SMART" id="SM00651">
    <property type="entry name" value="Sm"/>
    <property type="match status" value="1"/>
</dbReference>
<dbReference type="SUPFAM" id="SSF50182">
    <property type="entry name" value="Sm-like ribonucleoproteins"/>
    <property type="match status" value="1"/>
</dbReference>
<dbReference type="PROSITE" id="PS52002">
    <property type="entry name" value="SM"/>
    <property type="match status" value="1"/>
</dbReference>
<sequence>MSTSGQPPALKKYMDKQLQINLKANRMIVGTLRGFDQFMNLVVDNTVEVNGNEKNDIGMVVIRGNSVVTVEALEPVVNRIG</sequence>
<protein>
    <recommendedName>
        <fullName>Probable small nuclear ribonucleoprotein G</fullName>
        <shortName>snRNP-G</shortName>
    </recommendedName>
    <alternativeName>
        <fullName>Sm protein G</fullName>
        <shortName>Sm-G</shortName>
        <shortName>SmG</shortName>
    </alternativeName>
</protein>
<evidence type="ECO:0000250" key="1"/>
<evidence type="ECO:0000255" key="2">
    <source>
        <dbReference type="PROSITE-ProRule" id="PRU01346"/>
    </source>
</evidence>
<evidence type="ECO:0000305" key="3"/>
<organism>
    <name type="scientific">Medicago sativa</name>
    <name type="common">Alfalfa</name>
    <dbReference type="NCBI Taxonomy" id="3879"/>
    <lineage>
        <taxon>Eukaryota</taxon>
        <taxon>Viridiplantae</taxon>
        <taxon>Streptophyta</taxon>
        <taxon>Embryophyta</taxon>
        <taxon>Tracheophyta</taxon>
        <taxon>Spermatophyta</taxon>
        <taxon>Magnoliopsida</taxon>
        <taxon>eudicotyledons</taxon>
        <taxon>Gunneridae</taxon>
        <taxon>Pentapetalae</taxon>
        <taxon>rosids</taxon>
        <taxon>fabids</taxon>
        <taxon>Fabales</taxon>
        <taxon>Fabaceae</taxon>
        <taxon>Papilionoideae</taxon>
        <taxon>50 kb inversion clade</taxon>
        <taxon>NPAAA clade</taxon>
        <taxon>Hologalegina</taxon>
        <taxon>IRL clade</taxon>
        <taxon>Trifolieae</taxon>
        <taxon>Medicago</taxon>
    </lineage>
</organism>
<keyword id="KW-0507">mRNA processing</keyword>
<keyword id="KW-0508">mRNA splicing</keyword>
<keyword id="KW-0539">Nucleus</keyword>
<keyword id="KW-0687">Ribonucleoprotein</keyword>
<keyword id="KW-0694">RNA-binding</keyword>
<keyword id="KW-0747">Spliceosome</keyword>
<accession>P24715</accession>
<proteinExistence type="inferred from homology"/>
<comment type="function">
    <text evidence="1">Probable common Sm protein, is found in U1 and U2 snRNPs and may be part of the spliceosome.</text>
</comment>
<comment type="subcellular location">
    <subcellularLocation>
        <location evidence="3">Nucleus</location>
    </subcellularLocation>
</comment>
<comment type="similarity">
    <text evidence="3">Belongs to the snRNP Sm proteins family.</text>
</comment>
<feature type="chain" id="PRO_0000125550" description="Probable small nuclear ribonucleoprotein G">
    <location>
        <begin position="1"/>
        <end position="81"/>
    </location>
</feature>
<feature type="domain" description="Sm" evidence="2">
    <location>
        <begin position="5"/>
        <end position="76"/>
    </location>
</feature>
<reference key="1">
    <citation type="journal article" date="1992" name="Nucleic Acids Res.">
        <title>An alfalfa cDNA encodes a protein with similarity to human snRNP-E.</title>
        <authorList>
            <person name="Hirt H."/>
            <person name="Gartner A."/>
            <person name="Heberle-Bors E."/>
        </authorList>
    </citation>
    <scope>NUCLEOTIDE SEQUENCE [MRNA]</scope>
    <source>
        <strain>cv. RA3</strain>
    </source>
</reference>
<gene>
    <name type="primary">C29</name>
</gene>